<dbReference type="EMBL" id="AE005174">
    <property type="protein sequence ID" value="AAG56973.1"/>
    <property type="molecule type" value="Genomic_DNA"/>
</dbReference>
<dbReference type="EMBL" id="BA000007">
    <property type="protein sequence ID" value="BAB36120.1"/>
    <property type="molecule type" value="Genomic_DNA"/>
</dbReference>
<dbReference type="PIR" id="A90966">
    <property type="entry name" value="A90966"/>
</dbReference>
<dbReference type="RefSeq" id="NP_310724.1">
    <property type="nucleotide sequence ID" value="NC_002695.1"/>
</dbReference>
<dbReference type="RefSeq" id="WP_001212226.1">
    <property type="nucleotide sequence ID" value="NZ_VOAI01000028.1"/>
</dbReference>
<dbReference type="SMR" id="P0AA72"/>
<dbReference type="STRING" id="386585.gene:10365730"/>
<dbReference type="GeneID" id="86946874"/>
<dbReference type="GeneID" id="913482"/>
<dbReference type="KEGG" id="ece:Z3050"/>
<dbReference type="KEGG" id="ecs:ECs_2697"/>
<dbReference type="PATRIC" id="fig|386585.9.peg.2826"/>
<dbReference type="eggNOG" id="COG0697">
    <property type="taxonomic scope" value="Bacteria"/>
</dbReference>
<dbReference type="HOGENOM" id="CLU_033863_5_1_6"/>
<dbReference type="OMA" id="AYGLFFY"/>
<dbReference type="Proteomes" id="UP000000558">
    <property type="component" value="Chromosome"/>
</dbReference>
<dbReference type="Proteomes" id="UP000002519">
    <property type="component" value="Chromosome"/>
</dbReference>
<dbReference type="GO" id="GO:0005886">
    <property type="term" value="C:plasma membrane"/>
    <property type="evidence" value="ECO:0007669"/>
    <property type="project" value="UniProtKB-SubCell"/>
</dbReference>
<dbReference type="InterPro" id="IPR050638">
    <property type="entry name" value="AA-Vitamin_Transporters"/>
</dbReference>
<dbReference type="InterPro" id="IPR004779">
    <property type="entry name" value="CO/AA/NH_transpt"/>
</dbReference>
<dbReference type="InterPro" id="IPR000620">
    <property type="entry name" value="EamA_dom"/>
</dbReference>
<dbReference type="NCBIfam" id="TIGR00950">
    <property type="entry name" value="2A78"/>
    <property type="match status" value="1"/>
</dbReference>
<dbReference type="NCBIfam" id="NF008432">
    <property type="entry name" value="PRK11272.1"/>
    <property type="match status" value="1"/>
</dbReference>
<dbReference type="PANTHER" id="PTHR32322:SF2">
    <property type="entry name" value="EAMA DOMAIN-CONTAINING PROTEIN"/>
    <property type="match status" value="1"/>
</dbReference>
<dbReference type="PANTHER" id="PTHR32322">
    <property type="entry name" value="INNER MEMBRANE TRANSPORTER"/>
    <property type="match status" value="1"/>
</dbReference>
<dbReference type="Pfam" id="PF00892">
    <property type="entry name" value="EamA"/>
    <property type="match status" value="2"/>
</dbReference>
<dbReference type="SUPFAM" id="SSF103481">
    <property type="entry name" value="Multidrug resistance efflux transporter EmrE"/>
    <property type="match status" value="2"/>
</dbReference>
<name>YEDA_ECO57</name>
<keyword id="KW-0997">Cell inner membrane</keyword>
<keyword id="KW-1003">Cell membrane</keyword>
<keyword id="KW-0472">Membrane</keyword>
<keyword id="KW-1185">Reference proteome</keyword>
<keyword id="KW-0677">Repeat</keyword>
<keyword id="KW-0812">Transmembrane</keyword>
<keyword id="KW-1133">Transmembrane helix</keyword>
<keyword id="KW-0813">Transport</keyword>
<proteinExistence type="inferred from homology"/>
<gene>
    <name type="primary">yedA</name>
    <name type="ordered locus">Z3050</name>
    <name type="ordered locus">ECs2697</name>
</gene>
<comment type="subcellular location">
    <subcellularLocation>
        <location evidence="1">Cell inner membrane</location>
        <topology evidence="1">Multi-pass membrane protein</topology>
    </subcellularLocation>
</comment>
<comment type="similarity">
    <text evidence="3">Belongs to the EamA transporter family.</text>
</comment>
<organism>
    <name type="scientific">Escherichia coli O157:H7</name>
    <dbReference type="NCBI Taxonomy" id="83334"/>
    <lineage>
        <taxon>Bacteria</taxon>
        <taxon>Pseudomonadati</taxon>
        <taxon>Pseudomonadota</taxon>
        <taxon>Gammaproteobacteria</taxon>
        <taxon>Enterobacterales</taxon>
        <taxon>Enterobacteriaceae</taxon>
        <taxon>Escherichia</taxon>
    </lineage>
</organism>
<evidence type="ECO:0000250" key="1"/>
<evidence type="ECO:0000255" key="2"/>
<evidence type="ECO:0000305" key="3"/>
<sequence length="306" mass="32194">MRFRQLLPLFGALFALYIIWGSTYFVIRIGVESWPPLMMAGVRFLAAGILLLAFLLLRGHKLPPLRPLLNAALIGLLLLAVGNGMVTVAEHQNVPSGIAAVVVATVPLFTLCFSRLFGIKTRKLEWVGIAIGLAGIIMLNSGGNLSGNPWGAILILIGSISWAFGSVYGSRITLPVGMMAGAIEMLAAGVVLMIASMIAGEKLTALPSLSGFLAVGYLALFGSIIAINAYMYLIRNVSPALATSYAYVNPVVAVLLGTGLGGETLSKIEWLALGVIVFAVVLVTLGKYLFPAKPVVAPVIQDASSE</sequence>
<accession>P0AA72</accession>
<accession>P09185</accession>
<reference key="1">
    <citation type="journal article" date="2001" name="Nature">
        <title>Genome sequence of enterohaemorrhagic Escherichia coli O157:H7.</title>
        <authorList>
            <person name="Perna N.T."/>
            <person name="Plunkett G. III"/>
            <person name="Burland V."/>
            <person name="Mau B."/>
            <person name="Glasner J.D."/>
            <person name="Rose D.J."/>
            <person name="Mayhew G.F."/>
            <person name="Evans P.S."/>
            <person name="Gregor J."/>
            <person name="Kirkpatrick H.A."/>
            <person name="Posfai G."/>
            <person name="Hackett J."/>
            <person name="Klink S."/>
            <person name="Boutin A."/>
            <person name="Shao Y."/>
            <person name="Miller L."/>
            <person name="Grotbeck E.J."/>
            <person name="Davis N.W."/>
            <person name="Lim A."/>
            <person name="Dimalanta E.T."/>
            <person name="Potamousis K."/>
            <person name="Apodaca J."/>
            <person name="Anantharaman T.S."/>
            <person name="Lin J."/>
            <person name="Yen G."/>
            <person name="Schwartz D.C."/>
            <person name="Welch R.A."/>
            <person name="Blattner F.R."/>
        </authorList>
    </citation>
    <scope>NUCLEOTIDE SEQUENCE [LARGE SCALE GENOMIC DNA]</scope>
    <source>
        <strain>O157:H7 / EDL933 / ATCC 700927 / EHEC</strain>
    </source>
</reference>
<reference key="2">
    <citation type="journal article" date="2001" name="DNA Res.">
        <title>Complete genome sequence of enterohemorrhagic Escherichia coli O157:H7 and genomic comparison with a laboratory strain K-12.</title>
        <authorList>
            <person name="Hayashi T."/>
            <person name="Makino K."/>
            <person name="Ohnishi M."/>
            <person name="Kurokawa K."/>
            <person name="Ishii K."/>
            <person name="Yokoyama K."/>
            <person name="Han C.-G."/>
            <person name="Ohtsubo E."/>
            <person name="Nakayama K."/>
            <person name="Murata T."/>
            <person name="Tanaka M."/>
            <person name="Tobe T."/>
            <person name="Iida T."/>
            <person name="Takami H."/>
            <person name="Honda T."/>
            <person name="Sasakawa C."/>
            <person name="Ogasawara N."/>
            <person name="Yasunaga T."/>
            <person name="Kuhara S."/>
            <person name="Shiba T."/>
            <person name="Hattori M."/>
            <person name="Shinagawa H."/>
        </authorList>
    </citation>
    <scope>NUCLEOTIDE SEQUENCE [LARGE SCALE GENOMIC DNA]</scope>
    <source>
        <strain>O157:H7 / Sakai / RIMD 0509952 / EHEC</strain>
    </source>
</reference>
<feature type="chain" id="PRO_0000108168" description="Uncharacterized inner membrane transporter YedA">
    <location>
        <begin position="1"/>
        <end position="306"/>
    </location>
</feature>
<feature type="topological domain" description="Cytoplasmic" evidence="2">
    <location>
        <begin position="1"/>
        <end position="6"/>
    </location>
</feature>
<feature type="transmembrane region" description="Helical" evidence="2">
    <location>
        <begin position="7"/>
        <end position="27"/>
    </location>
</feature>
<feature type="topological domain" description="Periplasmic" evidence="2">
    <location>
        <begin position="28"/>
        <end position="36"/>
    </location>
</feature>
<feature type="transmembrane region" description="Helical" evidence="2">
    <location>
        <begin position="37"/>
        <end position="57"/>
    </location>
</feature>
<feature type="topological domain" description="Cytoplasmic" evidence="2">
    <location>
        <begin position="58"/>
        <end position="67"/>
    </location>
</feature>
<feature type="transmembrane region" description="Helical" evidence="2">
    <location>
        <begin position="68"/>
        <end position="88"/>
    </location>
</feature>
<feature type="topological domain" description="Periplasmic" evidence="2">
    <location>
        <begin position="89"/>
        <end position="93"/>
    </location>
</feature>
<feature type="transmembrane region" description="Helical" evidence="2">
    <location>
        <begin position="94"/>
        <end position="114"/>
    </location>
</feature>
<feature type="topological domain" description="Cytoplasmic" evidence="2">
    <location>
        <begin position="115"/>
        <end position="125"/>
    </location>
</feature>
<feature type="transmembrane region" description="Helical" evidence="2">
    <location>
        <begin position="126"/>
        <end position="146"/>
    </location>
</feature>
<feature type="topological domain" description="Periplasmic" evidence="2">
    <location>
        <begin position="147"/>
        <end position="148"/>
    </location>
</feature>
<feature type="transmembrane region" description="Helical" evidence="2">
    <location>
        <begin position="149"/>
        <end position="169"/>
    </location>
</feature>
<feature type="topological domain" description="Cytoplasmic" evidence="2">
    <location>
        <begin position="170"/>
        <end position="173"/>
    </location>
</feature>
<feature type="transmembrane region" description="Helical" evidence="2">
    <location>
        <begin position="174"/>
        <end position="194"/>
    </location>
</feature>
<feature type="topological domain" description="Periplasmic" evidence="2">
    <location>
        <begin position="195"/>
        <end position="206"/>
    </location>
</feature>
<feature type="transmembrane region" description="Helical" evidence="2">
    <location>
        <begin position="207"/>
        <end position="227"/>
    </location>
</feature>
<feature type="topological domain" description="Cytoplasmic" evidence="2">
    <location>
        <begin position="228"/>
        <end position="239"/>
    </location>
</feature>
<feature type="transmembrane region" description="Helical" evidence="2">
    <location>
        <begin position="240"/>
        <end position="260"/>
    </location>
</feature>
<feature type="topological domain" description="Periplasmic" evidence="2">
    <location>
        <begin position="261"/>
        <end position="269"/>
    </location>
</feature>
<feature type="transmembrane region" description="Helical" evidence="2">
    <location>
        <begin position="270"/>
        <end position="290"/>
    </location>
</feature>
<feature type="topological domain" description="Cytoplasmic" evidence="2">
    <location>
        <begin position="291"/>
        <end position="306"/>
    </location>
</feature>
<feature type="domain" description="EamA 1">
    <location>
        <begin position="18"/>
        <end position="141"/>
    </location>
</feature>
<feature type="domain" description="EamA 2">
    <location>
        <begin position="160"/>
        <end position="285"/>
    </location>
</feature>
<protein>
    <recommendedName>
        <fullName>Uncharacterized inner membrane transporter YedA</fullName>
    </recommendedName>
</protein>